<keyword id="KW-0520">NAD</keyword>
<keyword id="KW-0560">Oxidoreductase</keyword>
<proteinExistence type="inferred from homology"/>
<evidence type="ECO:0000250" key="1"/>
<evidence type="ECO:0000255" key="2">
    <source>
        <dbReference type="PROSITE-ProRule" id="PRU10001"/>
    </source>
</evidence>
<evidence type="ECO:0000305" key="3"/>
<accession>P07162</accession>
<accession>Q24233</accession>
<comment type="catalytic activity">
    <reaction evidence="2">
        <text>a primary alcohol + NAD(+) = an aldehyde + NADH + H(+)</text>
        <dbReference type="Rhea" id="RHEA:10736"/>
        <dbReference type="ChEBI" id="CHEBI:15378"/>
        <dbReference type="ChEBI" id="CHEBI:15734"/>
        <dbReference type="ChEBI" id="CHEBI:17478"/>
        <dbReference type="ChEBI" id="CHEBI:57540"/>
        <dbReference type="ChEBI" id="CHEBI:57945"/>
        <dbReference type="EC" id="1.1.1.1"/>
    </reaction>
</comment>
<comment type="catalytic activity">
    <reaction evidence="2">
        <text>a secondary alcohol + NAD(+) = a ketone + NADH + H(+)</text>
        <dbReference type="Rhea" id="RHEA:10740"/>
        <dbReference type="ChEBI" id="CHEBI:15378"/>
        <dbReference type="ChEBI" id="CHEBI:17087"/>
        <dbReference type="ChEBI" id="CHEBI:35681"/>
        <dbReference type="ChEBI" id="CHEBI:57540"/>
        <dbReference type="ChEBI" id="CHEBI:57945"/>
        <dbReference type="EC" id="1.1.1.1"/>
    </reaction>
</comment>
<comment type="subunit">
    <text>Homodimer.</text>
</comment>
<comment type="similarity">
    <text evidence="3">Belongs to the short-chain dehydrogenases/reductases (SDR) family.</text>
</comment>
<dbReference type="EC" id="1.1.1.1"/>
<dbReference type="EMBL" id="Z00033">
    <property type="protein sequence ID" value="CAA77334.1"/>
    <property type="molecule type" value="Genomic_DNA"/>
</dbReference>
<dbReference type="EMBL" id="M19264">
    <property type="protein sequence ID" value="AAA28332.1"/>
    <property type="molecule type" value="Genomic_DNA"/>
</dbReference>
<dbReference type="EMBL" id="X63953">
    <property type="protein sequence ID" value="CAA45374.1"/>
    <property type="molecule type" value="Genomic_DNA"/>
</dbReference>
<dbReference type="PIR" id="S09633">
    <property type="entry name" value="S09633"/>
</dbReference>
<dbReference type="SMR" id="P07162"/>
<dbReference type="Proteomes" id="UP000515162">
    <property type="component" value="Unplaced"/>
</dbReference>
<dbReference type="GO" id="GO:0005829">
    <property type="term" value="C:cytosol"/>
    <property type="evidence" value="ECO:0007669"/>
    <property type="project" value="TreeGrafter"/>
</dbReference>
<dbReference type="GO" id="GO:0004022">
    <property type="term" value="F:alcohol dehydrogenase (NAD+) activity"/>
    <property type="evidence" value="ECO:0000250"/>
    <property type="project" value="UniProtKB"/>
</dbReference>
<dbReference type="GO" id="GO:0006066">
    <property type="term" value="P:alcohol metabolic process"/>
    <property type="evidence" value="ECO:0007669"/>
    <property type="project" value="InterPro"/>
</dbReference>
<dbReference type="CDD" id="cd05323">
    <property type="entry name" value="ADH_SDR_c_like"/>
    <property type="match status" value="1"/>
</dbReference>
<dbReference type="FunFam" id="3.40.50.720:FF:000302">
    <property type="entry name" value="Alcohol dehydrogenase"/>
    <property type="match status" value="1"/>
</dbReference>
<dbReference type="Gene3D" id="3.40.50.720">
    <property type="entry name" value="NAD(P)-binding Rossmann-like Domain"/>
    <property type="match status" value="1"/>
</dbReference>
<dbReference type="InterPro" id="IPR002425">
    <property type="entry name" value="ADH_Drosophila-type"/>
</dbReference>
<dbReference type="InterPro" id="IPR036291">
    <property type="entry name" value="NAD(P)-bd_dom_sf"/>
</dbReference>
<dbReference type="InterPro" id="IPR020904">
    <property type="entry name" value="Sc_DH/Rdtase_CS"/>
</dbReference>
<dbReference type="InterPro" id="IPR002347">
    <property type="entry name" value="SDR_fam"/>
</dbReference>
<dbReference type="PANTHER" id="PTHR42901">
    <property type="entry name" value="ALCOHOL DEHYDROGENASE"/>
    <property type="match status" value="1"/>
</dbReference>
<dbReference type="PANTHER" id="PTHR42901:SF1">
    <property type="entry name" value="ALCOHOL DEHYDROGENASE"/>
    <property type="match status" value="1"/>
</dbReference>
<dbReference type="Pfam" id="PF00106">
    <property type="entry name" value="adh_short"/>
    <property type="match status" value="1"/>
</dbReference>
<dbReference type="PRINTS" id="PR01168">
    <property type="entry name" value="ALCDHDRGNASE"/>
</dbReference>
<dbReference type="PRINTS" id="PR01167">
    <property type="entry name" value="INSADHFAMILY"/>
</dbReference>
<dbReference type="PRINTS" id="PR00080">
    <property type="entry name" value="SDRFAMILY"/>
</dbReference>
<dbReference type="SUPFAM" id="SSF51735">
    <property type="entry name" value="NAD(P)-binding Rossmann-fold domains"/>
    <property type="match status" value="1"/>
</dbReference>
<dbReference type="PROSITE" id="PS00061">
    <property type="entry name" value="ADH_SHORT"/>
    <property type="match status" value="1"/>
</dbReference>
<reference key="1">
    <citation type="journal article" date="1984" name="Nature">
        <title>Conservation and change in the DNA sequences coding for alcohol dehydrogenase in sibling species of Drosophila.</title>
        <authorList>
            <person name="Bodmer M."/>
            <person name="Ashburner M."/>
        </authorList>
    </citation>
    <scope>NUCLEOTIDE SEQUENCE [GENOMIC DNA]</scope>
</reference>
<reference key="2">
    <citation type="journal article" date="1984" name="J. Mol. Evol.">
        <title>Nucleotide sequence comparison of the Adh gene in three drosophilids.</title>
        <authorList>
            <person name="Cohn V.H."/>
            <person name="Thompson M.A."/>
            <person name="Moore G.P."/>
        </authorList>
    </citation>
    <scope>NUCLEOTIDE SEQUENCE [GENOMIC DNA]</scope>
</reference>
<reference key="3">
    <citation type="journal article" date="1988" name="Mol. Biol. Evol.">
        <title>Organization and evolution of the alcohol dehydrogenase gene in Drosophila.</title>
        <authorList>
            <person name="Cohn V.H."/>
            <person name="Moore G.P."/>
        </authorList>
    </citation>
    <scope>NUCLEOTIDE SEQUENCE [GENOMIC DNA]</scope>
</reference>
<reference key="4">
    <citation type="journal article" date="1991" name="J. Mol. Evol.">
        <title>Evidence for interspecific transfer of the transposable element mariner between Drosophila and Zaprionus.</title>
        <authorList>
            <person name="Maruyama K."/>
            <person name="Hartl D.L."/>
        </authorList>
    </citation>
    <scope>NUCLEOTIDE SEQUENCE [GENOMIC DNA]</scope>
</reference>
<organism>
    <name type="scientific">Drosophila mauritiana</name>
    <name type="common">Fruit fly</name>
    <dbReference type="NCBI Taxonomy" id="7226"/>
    <lineage>
        <taxon>Eukaryota</taxon>
        <taxon>Metazoa</taxon>
        <taxon>Ecdysozoa</taxon>
        <taxon>Arthropoda</taxon>
        <taxon>Hexapoda</taxon>
        <taxon>Insecta</taxon>
        <taxon>Pterygota</taxon>
        <taxon>Neoptera</taxon>
        <taxon>Endopterygota</taxon>
        <taxon>Diptera</taxon>
        <taxon>Brachycera</taxon>
        <taxon>Muscomorpha</taxon>
        <taxon>Ephydroidea</taxon>
        <taxon>Drosophilidae</taxon>
        <taxon>Drosophila</taxon>
        <taxon>Sophophora</taxon>
    </lineage>
</organism>
<gene>
    <name type="primary">Adh</name>
</gene>
<protein>
    <recommendedName>
        <fullName>Alcohol dehydrogenase</fullName>
        <ecNumber>1.1.1.1</ecNumber>
    </recommendedName>
</protein>
<sequence>MAFTLTNKNVIFVAGLGGIGLDTSKELVKRDLKNLVILDRIENPAAIAELQAINPKVTVTFYPYDVTVPIAETTKLLKTIFAKLKTVDVLINGAGILDDHQIERTIAVNYTGLVNTTTAILDFWDKRKGGPGGIICNIGSVTGFNAIYQVPVYSGTKAAVVNFTSSLAKLAPITGVTAYTVNPGITRTTLVHKFNSWLDVEPQVAEKLLAHPTQPSLACAENFVKAIELNQNGAIWKLDLSTLEAIQWTKHWDSGI</sequence>
<name>ADH_DROMA</name>
<feature type="initiator methionine" description="Removed">
    <location>
        <position position="1"/>
    </location>
</feature>
<feature type="chain" id="PRO_0000054472" description="Alcohol dehydrogenase">
    <location>
        <begin position="2"/>
        <end position="256"/>
    </location>
</feature>
<feature type="active site" description="Proton acceptor" evidence="2">
    <location>
        <position position="153"/>
    </location>
</feature>
<feature type="binding site" evidence="1">
    <location>
        <begin position="12"/>
        <end position="35"/>
    </location>
    <ligand>
        <name>NAD(+)</name>
        <dbReference type="ChEBI" id="CHEBI:57540"/>
    </ligand>
</feature>
<feature type="binding site" evidence="1">
    <location>
        <position position="140"/>
    </location>
    <ligand>
        <name>substrate</name>
    </ligand>
</feature>
<feature type="sequence conflict" description="In Ref. 3 and 4." evidence="3" ref="3 4">
    <original>I</original>
    <variation>V</variation>
    <location>
        <position position="246"/>
    </location>
</feature>